<dbReference type="EMBL" id="BX571856">
    <property type="protein sequence ID" value="CAG41315.1"/>
    <property type="molecule type" value="Genomic_DNA"/>
</dbReference>
<dbReference type="RefSeq" id="WP_000024830.1">
    <property type="nucleotide sequence ID" value="NC_002952.2"/>
</dbReference>
<dbReference type="SMR" id="Q6GEI4"/>
<dbReference type="KEGG" id="sar:SAR2334"/>
<dbReference type="HOGENOM" id="CLU_041575_5_2_9"/>
<dbReference type="Proteomes" id="UP000000596">
    <property type="component" value="Chromosome"/>
</dbReference>
<dbReference type="GO" id="GO:1990904">
    <property type="term" value="C:ribonucleoprotein complex"/>
    <property type="evidence" value="ECO:0007669"/>
    <property type="project" value="UniProtKB-KW"/>
</dbReference>
<dbReference type="GO" id="GO:0005840">
    <property type="term" value="C:ribosome"/>
    <property type="evidence" value="ECO:0007669"/>
    <property type="project" value="UniProtKB-KW"/>
</dbReference>
<dbReference type="GO" id="GO:0019843">
    <property type="term" value="F:rRNA binding"/>
    <property type="evidence" value="ECO:0007669"/>
    <property type="project" value="UniProtKB-UniRule"/>
</dbReference>
<dbReference type="GO" id="GO:0003735">
    <property type="term" value="F:structural constituent of ribosome"/>
    <property type="evidence" value="ECO:0007669"/>
    <property type="project" value="InterPro"/>
</dbReference>
<dbReference type="GO" id="GO:0006412">
    <property type="term" value="P:translation"/>
    <property type="evidence" value="ECO:0007669"/>
    <property type="project" value="UniProtKB-UniRule"/>
</dbReference>
<dbReference type="FunFam" id="3.40.1370.10:FF:000003">
    <property type="entry name" value="50S ribosomal protein L4"/>
    <property type="match status" value="1"/>
</dbReference>
<dbReference type="Gene3D" id="3.40.1370.10">
    <property type="match status" value="1"/>
</dbReference>
<dbReference type="HAMAP" id="MF_01328_B">
    <property type="entry name" value="Ribosomal_uL4_B"/>
    <property type="match status" value="1"/>
</dbReference>
<dbReference type="InterPro" id="IPR002136">
    <property type="entry name" value="Ribosomal_uL4"/>
</dbReference>
<dbReference type="InterPro" id="IPR013005">
    <property type="entry name" value="Ribosomal_uL4-like"/>
</dbReference>
<dbReference type="InterPro" id="IPR023574">
    <property type="entry name" value="Ribosomal_uL4_dom_sf"/>
</dbReference>
<dbReference type="NCBIfam" id="TIGR03953">
    <property type="entry name" value="rplD_bact"/>
    <property type="match status" value="1"/>
</dbReference>
<dbReference type="PANTHER" id="PTHR10746">
    <property type="entry name" value="50S RIBOSOMAL PROTEIN L4"/>
    <property type="match status" value="1"/>
</dbReference>
<dbReference type="PANTHER" id="PTHR10746:SF6">
    <property type="entry name" value="LARGE RIBOSOMAL SUBUNIT PROTEIN UL4M"/>
    <property type="match status" value="1"/>
</dbReference>
<dbReference type="Pfam" id="PF00573">
    <property type="entry name" value="Ribosomal_L4"/>
    <property type="match status" value="1"/>
</dbReference>
<dbReference type="SUPFAM" id="SSF52166">
    <property type="entry name" value="Ribosomal protein L4"/>
    <property type="match status" value="1"/>
</dbReference>
<gene>
    <name evidence="1" type="primary">rplD</name>
    <name type="ordered locus">SAR2334</name>
</gene>
<reference key="1">
    <citation type="journal article" date="2004" name="Proc. Natl. Acad. Sci. U.S.A.">
        <title>Complete genomes of two clinical Staphylococcus aureus strains: evidence for the rapid evolution of virulence and drug resistance.</title>
        <authorList>
            <person name="Holden M.T.G."/>
            <person name="Feil E.J."/>
            <person name="Lindsay J.A."/>
            <person name="Peacock S.J."/>
            <person name="Day N.P.J."/>
            <person name="Enright M.C."/>
            <person name="Foster T.J."/>
            <person name="Moore C.E."/>
            <person name="Hurst L."/>
            <person name="Atkin R."/>
            <person name="Barron A."/>
            <person name="Bason N."/>
            <person name="Bentley S.D."/>
            <person name="Chillingworth C."/>
            <person name="Chillingworth T."/>
            <person name="Churcher C."/>
            <person name="Clark L."/>
            <person name="Corton C."/>
            <person name="Cronin A."/>
            <person name="Doggett J."/>
            <person name="Dowd L."/>
            <person name="Feltwell T."/>
            <person name="Hance Z."/>
            <person name="Harris B."/>
            <person name="Hauser H."/>
            <person name="Holroyd S."/>
            <person name="Jagels K."/>
            <person name="James K.D."/>
            <person name="Lennard N."/>
            <person name="Line A."/>
            <person name="Mayes R."/>
            <person name="Moule S."/>
            <person name="Mungall K."/>
            <person name="Ormond D."/>
            <person name="Quail M.A."/>
            <person name="Rabbinowitsch E."/>
            <person name="Rutherford K.M."/>
            <person name="Sanders M."/>
            <person name="Sharp S."/>
            <person name="Simmonds M."/>
            <person name="Stevens K."/>
            <person name="Whitehead S."/>
            <person name="Barrell B.G."/>
            <person name="Spratt B.G."/>
            <person name="Parkhill J."/>
        </authorList>
    </citation>
    <scope>NUCLEOTIDE SEQUENCE [LARGE SCALE GENOMIC DNA]</scope>
    <source>
        <strain>MRSA252</strain>
    </source>
</reference>
<organism>
    <name type="scientific">Staphylococcus aureus (strain MRSA252)</name>
    <dbReference type="NCBI Taxonomy" id="282458"/>
    <lineage>
        <taxon>Bacteria</taxon>
        <taxon>Bacillati</taxon>
        <taxon>Bacillota</taxon>
        <taxon>Bacilli</taxon>
        <taxon>Bacillales</taxon>
        <taxon>Staphylococcaceae</taxon>
        <taxon>Staphylococcus</taxon>
    </lineage>
</organism>
<sequence>MANYDVLKLDGTKSGSIELSDAVFGIEPNNSVLFEAINLQRASLRQGTHAVKNRSAVSGGGRKPWKQKGTGRARQGTIRAPQWRGGGIVFGPTPRSYAYKMPKKMRRLALRSALSFKVQENGLTVVDAFNFEAPKTKEFKNVLSTLEQPKKVLVVTENEDVNVELSARNIPGVQVTTAQGLNVLDITNADSLVITEAAAKKVEEVLG</sequence>
<protein>
    <recommendedName>
        <fullName evidence="1">Large ribosomal subunit protein uL4</fullName>
    </recommendedName>
    <alternativeName>
        <fullName evidence="3">50S ribosomal protein L4</fullName>
    </alternativeName>
</protein>
<accession>Q6GEI4</accession>
<name>RL4_STAAR</name>
<feature type="chain" id="PRO_0000129277" description="Large ribosomal subunit protein uL4">
    <location>
        <begin position="1"/>
        <end position="207"/>
    </location>
</feature>
<feature type="region of interest" description="Disordered" evidence="2">
    <location>
        <begin position="50"/>
        <end position="76"/>
    </location>
</feature>
<comment type="function">
    <text evidence="1">One of the primary rRNA binding proteins, this protein initially binds near the 5'-end of the 23S rRNA. It is important during the early stages of 50S assembly. It makes multiple contacts with different domains of the 23S rRNA in the assembled 50S subunit and ribosome.</text>
</comment>
<comment type="function">
    <text evidence="1">Forms part of the polypeptide exit tunnel.</text>
</comment>
<comment type="subunit">
    <text evidence="1">Part of the 50S ribosomal subunit.</text>
</comment>
<comment type="similarity">
    <text evidence="1">Belongs to the universal ribosomal protein uL4 family.</text>
</comment>
<proteinExistence type="inferred from homology"/>
<evidence type="ECO:0000255" key="1">
    <source>
        <dbReference type="HAMAP-Rule" id="MF_01328"/>
    </source>
</evidence>
<evidence type="ECO:0000256" key="2">
    <source>
        <dbReference type="SAM" id="MobiDB-lite"/>
    </source>
</evidence>
<evidence type="ECO:0000305" key="3"/>
<keyword id="KW-0687">Ribonucleoprotein</keyword>
<keyword id="KW-0689">Ribosomal protein</keyword>
<keyword id="KW-0694">RNA-binding</keyword>
<keyword id="KW-0699">rRNA-binding</keyword>